<evidence type="ECO:0000255" key="1">
    <source>
        <dbReference type="HAMAP-Rule" id="MF_00165"/>
    </source>
</evidence>
<keyword id="KW-0067">ATP-binding</keyword>
<keyword id="KW-0418">Kinase</keyword>
<keyword id="KW-0545">Nucleotide biosynthesis</keyword>
<keyword id="KW-0547">Nucleotide-binding</keyword>
<keyword id="KW-0808">Transferase</keyword>
<organism>
    <name type="scientific">Bordetella bronchiseptica (strain ATCC BAA-588 / NCTC 13252 / RB50)</name>
    <name type="common">Alcaligenes bronchisepticus</name>
    <dbReference type="NCBI Taxonomy" id="257310"/>
    <lineage>
        <taxon>Bacteria</taxon>
        <taxon>Pseudomonadati</taxon>
        <taxon>Pseudomonadota</taxon>
        <taxon>Betaproteobacteria</taxon>
        <taxon>Burkholderiales</taxon>
        <taxon>Alcaligenaceae</taxon>
        <taxon>Bordetella</taxon>
    </lineage>
</organism>
<reference key="1">
    <citation type="journal article" date="2003" name="Nat. Genet.">
        <title>Comparative analysis of the genome sequences of Bordetella pertussis, Bordetella parapertussis and Bordetella bronchiseptica.</title>
        <authorList>
            <person name="Parkhill J."/>
            <person name="Sebaihia M."/>
            <person name="Preston A."/>
            <person name="Murphy L.D."/>
            <person name="Thomson N.R."/>
            <person name="Harris D.E."/>
            <person name="Holden M.T.G."/>
            <person name="Churcher C.M."/>
            <person name="Bentley S.D."/>
            <person name="Mungall K.L."/>
            <person name="Cerdeno-Tarraga A.-M."/>
            <person name="Temple L."/>
            <person name="James K.D."/>
            <person name="Harris B."/>
            <person name="Quail M.A."/>
            <person name="Achtman M."/>
            <person name="Atkin R."/>
            <person name="Baker S."/>
            <person name="Basham D."/>
            <person name="Bason N."/>
            <person name="Cherevach I."/>
            <person name="Chillingworth T."/>
            <person name="Collins M."/>
            <person name="Cronin A."/>
            <person name="Davis P."/>
            <person name="Doggett J."/>
            <person name="Feltwell T."/>
            <person name="Goble A."/>
            <person name="Hamlin N."/>
            <person name="Hauser H."/>
            <person name="Holroyd S."/>
            <person name="Jagels K."/>
            <person name="Leather S."/>
            <person name="Moule S."/>
            <person name="Norberczak H."/>
            <person name="O'Neil S."/>
            <person name="Ormond D."/>
            <person name="Price C."/>
            <person name="Rabbinowitsch E."/>
            <person name="Rutter S."/>
            <person name="Sanders M."/>
            <person name="Saunders D."/>
            <person name="Seeger K."/>
            <person name="Sharp S."/>
            <person name="Simmonds M."/>
            <person name="Skelton J."/>
            <person name="Squares R."/>
            <person name="Squares S."/>
            <person name="Stevens K."/>
            <person name="Unwin L."/>
            <person name="Whitehead S."/>
            <person name="Barrell B.G."/>
            <person name="Maskell D.J."/>
        </authorList>
    </citation>
    <scope>NUCLEOTIDE SEQUENCE [LARGE SCALE GENOMIC DNA]</scope>
    <source>
        <strain>ATCC BAA-588 / NCTC 13252 / RB50</strain>
    </source>
</reference>
<dbReference type="EC" id="2.7.4.9" evidence="1"/>
<dbReference type="EMBL" id="BX640445">
    <property type="protein sequence ID" value="CAE33130.1"/>
    <property type="molecule type" value="Genomic_DNA"/>
</dbReference>
<dbReference type="RefSeq" id="WP_003811733.1">
    <property type="nucleotide sequence ID" value="NC_002927.3"/>
</dbReference>
<dbReference type="SMR" id="Q7WJ63"/>
<dbReference type="GeneID" id="93203318"/>
<dbReference type="KEGG" id="bbr:BB2637"/>
<dbReference type="eggNOG" id="COG0125">
    <property type="taxonomic scope" value="Bacteria"/>
</dbReference>
<dbReference type="HOGENOM" id="CLU_049131_0_2_4"/>
<dbReference type="Proteomes" id="UP000001027">
    <property type="component" value="Chromosome"/>
</dbReference>
<dbReference type="GO" id="GO:0005829">
    <property type="term" value="C:cytosol"/>
    <property type="evidence" value="ECO:0007669"/>
    <property type="project" value="TreeGrafter"/>
</dbReference>
<dbReference type="GO" id="GO:0005524">
    <property type="term" value="F:ATP binding"/>
    <property type="evidence" value="ECO:0007669"/>
    <property type="project" value="UniProtKB-UniRule"/>
</dbReference>
<dbReference type="GO" id="GO:0004798">
    <property type="term" value="F:dTMP kinase activity"/>
    <property type="evidence" value="ECO:0007669"/>
    <property type="project" value="UniProtKB-UniRule"/>
</dbReference>
<dbReference type="GO" id="GO:0006233">
    <property type="term" value="P:dTDP biosynthetic process"/>
    <property type="evidence" value="ECO:0007669"/>
    <property type="project" value="InterPro"/>
</dbReference>
<dbReference type="GO" id="GO:0006235">
    <property type="term" value="P:dTTP biosynthetic process"/>
    <property type="evidence" value="ECO:0007669"/>
    <property type="project" value="UniProtKB-UniRule"/>
</dbReference>
<dbReference type="GO" id="GO:0006227">
    <property type="term" value="P:dUDP biosynthetic process"/>
    <property type="evidence" value="ECO:0007669"/>
    <property type="project" value="TreeGrafter"/>
</dbReference>
<dbReference type="CDD" id="cd01672">
    <property type="entry name" value="TMPK"/>
    <property type="match status" value="1"/>
</dbReference>
<dbReference type="FunFam" id="3.40.50.300:FF:000225">
    <property type="entry name" value="Thymidylate kinase"/>
    <property type="match status" value="1"/>
</dbReference>
<dbReference type="Gene3D" id="3.40.50.300">
    <property type="entry name" value="P-loop containing nucleotide triphosphate hydrolases"/>
    <property type="match status" value="1"/>
</dbReference>
<dbReference type="HAMAP" id="MF_00165">
    <property type="entry name" value="Thymidylate_kinase"/>
    <property type="match status" value="1"/>
</dbReference>
<dbReference type="InterPro" id="IPR027417">
    <property type="entry name" value="P-loop_NTPase"/>
</dbReference>
<dbReference type="InterPro" id="IPR039430">
    <property type="entry name" value="Thymidylate_kin-like_dom"/>
</dbReference>
<dbReference type="InterPro" id="IPR018094">
    <property type="entry name" value="Thymidylate_kinase"/>
</dbReference>
<dbReference type="NCBIfam" id="TIGR00041">
    <property type="entry name" value="DTMP_kinase"/>
    <property type="match status" value="1"/>
</dbReference>
<dbReference type="PANTHER" id="PTHR10344">
    <property type="entry name" value="THYMIDYLATE KINASE"/>
    <property type="match status" value="1"/>
</dbReference>
<dbReference type="PANTHER" id="PTHR10344:SF4">
    <property type="entry name" value="UMP-CMP KINASE 2, MITOCHONDRIAL"/>
    <property type="match status" value="1"/>
</dbReference>
<dbReference type="Pfam" id="PF02223">
    <property type="entry name" value="Thymidylate_kin"/>
    <property type="match status" value="1"/>
</dbReference>
<dbReference type="SUPFAM" id="SSF52540">
    <property type="entry name" value="P-loop containing nucleoside triphosphate hydrolases"/>
    <property type="match status" value="1"/>
</dbReference>
<comment type="function">
    <text evidence="1">Phosphorylation of dTMP to form dTDP in both de novo and salvage pathways of dTTP synthesis.</text>
</comment>
<comment type="catalytic activity">
    <reaction evidence="1">
        <text>dTMP + ATP = dTDP + ADP</text>
        <dbReference type="Rhea" id="RHEA:13517"/>
        <dbReference type="ChEBI" id="CHEBI:30616"/>
        <dbReference type="ChEBI" id="CHEBI:58369"/>
        <dbReference type="ChEBI" id="CHEBI:63528"/>
        <dbReference type="ChEBI" id="CHEBI:456216"/>
        <dbReference type="EC" id="2.7.4.9"/>
    </reaction>
</comment>
<comment type="similarity">
    <text evidence="1">Belongs to the thymidylate kinase family.</text>
</comment>
<proteinExistence type="inferred from homology"/>
<gene>
    <name evidence="1" type="primary">tmk</name>
    <name type="ordered locus">BB2637</name>
</gene>
<name>KTHY_BORBR</name>
<protein>
    <recommendedName>
        <fullName evidence="1">Thymidylate kinase</fullName>
        <ecNumber evidence="1">2.7.4.9</ecNumber>
    </recommendedName>
    <alternativeName>
        <fullName evidence="1">dTMP kinase</fullName>
    </alternativeName>
</protein>
<sequence>MTPRGRFITLEGVDGAGKSTHTAWMVQALRDLGLTVLATREPGGTPVGEKLRELLLSEPMALETETLLMFAARCEHVREVIAPALARGEWVVCDRFTDASYAYQGGGRQLGAARVAALEQWVHPDLQPDRTWLFDVPLDVARARLARSRQLDRFEREEDAFFERTRAAYHERARSSDGRIRIIDSSRPLEVVRAQLDSEVRELVAQAA</sequence>
<feature type="chain" id="PRO_0000155243" description="Thymidylate kinase">
    <location>
        <begin position="1"/>
        <end position="208"/>
    </location>
</feature>
<feature type="binding site" evidence="1">
    <location>
        <begin position="12"/>
        <end position="19"/>
    </location>
    <ligand>
        <name>ATP</name>
        <dbReference type="ChEBI" id="CHEBI:30616"/>
    </ligand>
</feature>
<accession>Q7WJ63</accession>